<accession>Q8Z7E2</accession>
<feature type="signal peptide" evidence="1">
    <location>
        <begin position="1"/>
        <end position="21"/>
    </location>
</feature>
<feature type="chain" id="PRO_0000020191" description="Outer membrane protein W">
    <location>
        <begin position="22"/>
        <end position="212"/>
    </location>
</feature>
<dbReference type="EMBL" id="AL513382">
    <property type="protein sequence ID" value="CAD08400.1"/>
    <property type="molecule type" value="Genomic_DNA"/>
</dbReference>
<dbReference type="EMBL" id="AE014613">
    <property type="protein sequence ID" value="AAO69271.1"/>
    <property type="molecule type" value="Genomic_DNA"/>
</dbReference>
<dbReference type="RefSeq" id="NP_455766.1">
    <property type="nucleotide sequence ID" value="NC_003198.1"/>
</dbReference>
<dbReference type="RefSeq" id="WP_000714798.1">
    <property type="nucleotide sequence ID" value="NZ_WSUR01000006.1"/>
</dbReference>
<dbReference type="SMR" id="Q8Z7E2"/>
<dbReference type="STRING" id="220341.gene:17585280"/>
<dbReference type="KEGG" id="stt:t1644"/>
<dbReference type="KEGG" id="sty:STY1319"/>
<dbReference type="PATRIC" id="fig|220341.7.peg.1326"/>
<dbReference type="eggNOG" id="COG3047">
    <property type="taxonomic scope" value="Bacteria"/>
</dbReference>
<dbReference type="HOGENOM" id="CLU_042505_1_1_6"/>
<dbReference type="OMA" id="GMDYMLT"/>
<dbReference type="OrthoDB" id="9807574at2"/>
<dbReference type="Proteomes" id="UP000000541">
    <property type="component" value="Chromosome"/>
</dbReference>
<dbReference type="Proteomes" id="UP000002670">
    <property type="component" value="Chromosome"/>
</dbReference>
<dbReference type="GO" id="GO:0009279">
    <property type="term" value="C:cell outer membrane"/>
    <property type="evidence" value="ECO:0007669"/>
    <property type="project" value="UniProtKB-SubCell"/>
</dbReference>
<dbReference type="GO" id="GO:0055085">
    <property type="term" value="P:transmembrane transport"/>
    <property type="evidence" value="ECO:0007669"/>
    <property type="project" value="TreeGrafter"/>
</dbReference>
<dbReference type="FunFam" id="2.40.160.20:FF:000001">
    <property type="entry name" value="Outer membrane protein W"/>
    <property type="match status" value="1"/>
</dbReference>
<dbReference type="Gene3D" id="2.40.160.20">
    <property type="match status" value="1"/>
</dbReference>
<dbReference type="InterPro" id="IPR011250">
    <property type="entry name" value="OMP/PagP_b-brl"/>
</dbReference>
<dbReference type="InterPro" id="IPR005618">
    <property type="entry name" value="OMPW"/>
</dbReference>
<dbReference type="NCBIfam" id="NF008202">
    <property type="entry name" value="PRK10959.1"/>
    <property type="match status" value="1"/>
</dbReference>
<dbReference type="PANTHER" id="PTHR36920">
    <property type="match status" value="1"/>
</dbReference>
<dbReference type="PANTHER" id="PTHR36920:SF1">
    <property type="entry name" value="OUTER MEMBRANE PROTEIN W"/>
    <property type="match status" value="1"/>
</dbReference>
<dbReference type="Pfam" id="PF03922">
    <property type="entry name" value="OmpW"/>
    <property type="match status" value="1"/>
</dbReference>
<dbReference type="SUPFAM" id="SSF56925">
    <property type="entry name" value="OMPA-like"/>
    <property type="match status" value="1"/>
</dbReference>
<protein>
    <recommendedName>
        <fullName>Outer membrane protein W</fullName>
    </recommendedName>
</protein>
<organism>
    <name type="scientific">Salmonella typhi</name>
    <dbReference type="NCBI Taxonomy" id="90370"/>
    <lineage>
        <taxon>Bacteria</taxon>
        <taxon>Pseudomonadati</taxon>
        <taxon>Pseudomonadota</taxon>
        <taxon>Gammaproteobacteria</taxon>
        <taxon>Enterobacterales</taxon>
        <taxon>Enterobacteriaceae</taxon>
        <taxon>Salmonella</taxon>
    </lineage>
</organism>
<keyword id="KW-0998">Cell outer membrane</keyword>
<keyword id="KW-0472">Membrane</keyword>
<keyword id="KW-0732">Signal</keyword>
<keyword id="KW-0812">Transmembrane</keyword>
<keyword id="KW-1134">Transmembrane beta strand</keyword>
<evidence type="ECO:0000250" key="1"/>
<evidence type="ECO:0000305" key="2"/>
<proteinExistence type="inferred from homology"/>
<gene>
    <name type="primary">ompW</name>
    <name type="ordered locus">STY1319</name>
    <name type="ordered locus">t1644</name>
</gene>
<name>OMPW_SALTI</name>
<sequence length="212" mass="22993">MKKFTVAALALTTLLSGSAFAHEAGEFFMRAGPATVRPTEGAGGTLGHLNGFDVSNNTQLGLTFTYMATDNIGVELLAATPFRHKVGTGATGDIATVHLLPPTLMAQWYFGDSSSKVRPYVGVGVNYTTFFDNDFNDNGKKTGLSDLSFKDSWGAAGQVGVDYLINRDWLIGASVWYMDIDTTANYKMGGVQQHDSVRLDPWVFMFSAGYRF</sequence>
<comment type="subcellular location">
    <subcellularLocation>
        <location>Cell outer membrane</location>
    </subcellularLocation>
</comment>
<comment type="similarity">
    <text evidence="2">Belongs to the OmpW/AlkL family.</text>
</comment>
<reference key="1">
    <citation type="journal article" date="2001" name="Nature">
        <title>Complete genome sequence of a multiple drug resistant Salmonella enterica serovar Typhi CT18.</title>
        <authorList>
            <person name="Parkhill J."/>
            <person name="Dougan G."/>
            <person name="James K.D."/>
            <person name="Thomson N.R."/>
            <person name="Pickard D."/>
            <person name="Wain J."/>
            <person name="Churcher C.M."/>
            <person name="Mungall K.L."/>
            <person name="Bentley S.D."/>
            <person name="Holden M.T.G."/>
            <person name="Sebaihia M."/>
            <person name="Baker S."/>
            <person name="Basham D."/>
            <person name="Brooks K."/>
            <person name="Chillingworth T."/>
            <person name="Connerton P."/>
            <person name="Cronin A."/>
            <person name="Davis P."/>
            <person name="Davies R.M."/>
            <person name="Dowd L."/>
            <person name="White N."/>
            <person name="Farrar J."/>
            <person name="Feltwell T."/>
            <person name="Hamlin N."/>
            <person name="Haque A."/>
            <person name="Hien T.T."/>
            <person name="Holroyd S."/>
            <person name="Jagels K."/>
            <person name="Krogh A."/>
            <person name="Larsen T.S."/>
            <person name="Leather S."/>
            <person name="Moule S."/>
            <person name="O'Gaora P."/>
            <person name="Parry C."/>
            <person name="Quail M.A."/>
            <person name="Rutherford K.M."/>
            <person name="Simmonds M."/>
            <person name="Skelton J."/>
            <person name="Stevens K."/>
            <person name="Whitehead S."/>
            <person name="Barrell B.G."/>
        </authorList>
    </citation>
    <scope>NUCLEOTIDE SEQUENCE [LARGE SCALE GENOMIC DNA]</scope>
    <source>
        <strain>CT18</strain>
    </source>
</reference>
<reference key="2">
    <citation type="journal article" date="2003" name="J. Bacteriol.">
        <title>Comparative genomics of Salmonella enterica serovar Typhi strains Ty2 and CT18.</title>
        <authorList>
            <person name="Deng W."/>
            <person name="Liou S.-R."/>
            <person name="Plunkett G. III"/>
            <person name="Mayhew G.F."/>
            <person name="Rose D.J."/>
            <person name="Burland V."/>
            <person name="Kodoyianni V."/>
            <person name="Schwartz D.C."/>
            <person name="Blattner F.R."/>
        </authorList>
    </citation>
    <scope>NUCLEOTIDE SEQUENCE [LARGE SCALE GENOMIC DNA]</scope>
    <source>
        <strain>ATCC 700931 / Ty2</strain>
    </source>
</reference>